<evidence type="ECO:0000255" key="1">
    <source>
        <dbReference type="HAMAP-Rule" id="MF_00004"/>
    </source>
</evidence>
<feature type="chain" id="PRO_1000000360" description="Adenine phosphoribosyltransferase">
    <location>
        <begin position="1"/>
        <end position="170"/>
    </location>
</feature>
<name>APT_STRSY</name>
<dbReference type="EC" id="2.4.2.7" evidence="1"/>
<dbReference type="EMBL" id="CP000407">
    <property type="protein sequence ID" value="ABP90273.1"/>
    <property type="molecule type" value="Genomic_DNA"/>
</dbReference>
<dbReference type="SMR" id="A4VVY4"/>
<dbReference type="STRING" id="391295.SSU05_1307"/>
<dbReference type="KEGG" id="ssu:SSU05_1307"/>
<dbReference type="eggNOG" id="COG0503">
    <property type="taxonomic scope" value="Bacteria"/>
</dbReference>
<dbReference type="HOGENOM" id="CLU_063339_3_0_9"/>
<dbReference type="UniPathway" id="UPA00588">
    <property type="reaction ID" value="UER00646"/>
</dbReference>
<dbReference type="GO" id="GO:0005737">
    <property type="term" value="C:cytoplasm"/>
    <property type="evidence" value="ECO:0007669"/>
    <property type="project" value="UniProtKB-SubCell"/>
</dbReference>
<dbReference type="GO" id="GO:0002055">
    <property type="term" value="F:adenine binding"/>
    <property type="evidence" value="ECO:0007669"/>
    <property type="project" value="TreeGrafter"/>
</dbReference>
<dbReference type="GO" id="GO:0003999">
    <property type="term" value="F:adenine phosphoribosyltransferase activity"/>
    <property type="evidence" value="ECO:0007669"/>
    <property type="project" value="UniProtKB-UniRule"/>
</dbReference>
<dbReference type="GO" id="GO:0016208">
    <property type="term" value="F:AMP binding"/>
    <property type="evidence" value="ECO:0007669"/>
    <property type="project" value="TreeGrafter"/>
</dbReference>
<dbReference type="GO" id="GO:0006168">
    <property type="term" value="P:adenine salvage"/>
    <property type="evidence" value="ECO:0007669"/>
    <property type="project" value="InterPro"/>
</dbReference>
<dbReference type="GO" id="GO:0044209">
    <property type="term" value="P:AMP salvage"/>
    <property type="evidence" value="ECO:0007669"/>
    <property type="project" value="UniProtKB-UniRule"/>
</dbReference>
<dbReference type="GO" id="GO:0006166">
    <property type="term" value="P:purine ribonucleoside salvage"/>
    <property type="evidence" value="ECO:0007669"/>
    <property type="project" value="UniProtKB-KW"/>
</dbReference>
<dbReference type="CDD" id="cd06223">
    <property type="entry name" value="PRTases_typeI"/>
    <property type="match status" value="1"/>
</dbReference>
<dbReference type="FunFam" id="3.40.50.2020:FF:000004">
    <property type="entry name" value="Adenine phosphoribosyltransferase"/>
    <property type="match status" value="1"/>
</dbReference>
<dbReference type="Gene3D" id="3.40.50.2020">
    <property type="match status" value="1"/>
</dbReference>
<dbReference type="HAMAP" id="MF_00004">
    <property type="entry name" value="Aden_phosphoribosyltr"/>
    <property type="match status" value="1"/>
</dbReference>
<dbReference type="InterPro" id="IPR005764">
    <property type="entry name" value="Ade_phspho_trans"/>
</dbReference>
<dbReference type="InterPro" id="IPR000836">
    <property type="entry name" value="PRibTrfase_dom"/>
</dbReference>
<dbReference type="InterPro" id="IPR029057">
    <property type="entry name" value="PRTase-like"/>
</dbReference>
<dbReference type="InterPro" id="IPR050054">
    <property type="entry name" value="UPRTase/APRTase"/>
</dbReference>
<dbReference type="NCBIfam" id="TIGR01090">
    <property type="entry name" value="apt"/>
    <property type="match status" value="1"/>
</dbReference>
<dbReference type="NCBIfam" id="NF002633">
    <property type="entry name" value="PRK02304.1-2"/>
    <property type="match status" value="1"/>
</dbReference>
<dbReference type="NCBIfam" id="NF002634">
    <property type="entry name" value="PRK02304.1-3"/>
    <property type="match status" value="1"/>
</dbReference>
<dbReference type="NCBIfam" id="NF002636">
    <property type="entry name" value="PRK02304.1-5"/>
    <property type="match status" value="1"/>
</dbReference>
<dbReference type="PANTHER" id="PTHR32315">
    <property type="entry name" value="ADENINE PHOSPHORIBOSYLTRANSFERASE"/>
    <property type="match status" value="1"/>
</dbReference>
<dbReference type="PANTHER" id="PTHR32315:SF3">
    <property type="entry name" value="ADENINE PHOSPHORIBOSYLTRANSFERASE"/>
    <property type="match status" value="1"/>
</dbReference>
<dbReference type="Pfam" id="PF00156">
    <property type="entry name" value="Pribosyltran"/>
    <property type="match status" value="1"/>
</dbReference>
<dbReference type="SUPFAM" id="SSF53271">
    <property type="entry name" value="PRTase-like"/>
    <property type="match status" value="1"/>
</dbReference>
<dbReference type="PROSITE" id="PS00103">
    <property type="entry name" value="PUR_PYR_PR_TRANSFER"/>
    <property type="match status" value="1"/>
</dbReference>
<sequence>MNLKDYIATIPNYPKEGIEFRDISPLMADGNAYSYAVREIVQYATDKQIDMIVGPEARGFIVGCPVAFELGIGFAPVRKPGKLPREVISADYEKEYGVDTLTMHADAIKPGQRVLIVDDLLATGGTVKATIEMIEKLGGIVAGCAFLIELDDLKGREAIGDYDYKVLMHY</sequence>
<reference key="1">
    <citation type="journal article" date="2007" name="PLoS ONE">
        <title>A glimpse of streptococcal toxic shock syndrome from comparative genomics of S. suis 2 Chinese isolates.</title>
        <authorList>
            <person name="Chen C."/>
            <person name="Tang J."/>
            <person name="Dong W."/>
            <person name="Wang C."/>
            <person name="Feng Y."/>
            <person name="Wang J."/>
            <person name="Zheng F."/>
            <person name="Pan X."/>
            <person name="Liu D."/>
            <person name="Li M."/>
            <person name="Song Y."/>
            <person name="Zhu X."/>
            <person name="Sun H."/>
            <person name="Feng T."/>
            <person name="Guo Z."/>
            <person name="Ju A."/>
            <person name="Ge J."/>
            <person name="Dong Y."/>
            <person name="Sun W."/>
            <person name="Jiang Y."/>
            <person name="Wang J."/>
            <person name="Yan J."/>
            <person name="Yang H."/>
            <person name="Wang X."/>
            <person name="Gao G.F."/>
            <person name="Yang R."/>
            <person name="Wang J."/>
            <person name="Yu J."/>
        </authorList>
    </citation>
    <scope>NUCLEOTIDE SEQUENCE [LARGE SCALE GENOMIC DNA]</scope>
    <source>
        <strain>05ZYH33</strain>
    </source>
</reference>
<protein>
    <recommendedName>
        <fullName evidence="1">Adenine phosphoribosyltransferase</fullName>
        <shortName evidence="1">APRT</shortName>
        <ecNumber evidence="1">2.4.2.7</ecNumber>
    </recommendedName>
</protein>
<gene>
    <name evidence="1" type="primary">apt</name>
    <name type="ordered locus">SSU05_1307</name>
</gene>
<accession>A4VVY4</accession>
<comment type="function">
    <text evidence="1">Catalyzes a salvage reaction resulting in the formation of AMP, that is energically less costly than de novo synthesis.</text>
</comment>
<comment type="catalytic activity">
    <reaction evidence="1">
        <text>AMP + diphosphate = 5-phospho-alpha-D-ribose 1-diphosphate + adenine</text>
        <dbReference type="Rhea" id="RHEA:16609"/>
        <dbReference type="ChEBI" id="CHEBI:16708"/>
        <dbReference type="ChEBI" id="CHEBI:33019"/>
        <dbReference type="ChEBI" id="CHEBI:58017"/>
        <dbReference type="ChEBI" id="CHEBI:456215"/>
        <dbReference type="EC" id="2.4.2.7"/>
    </reaction>
</comment>
<comment type="pathway">
    <text evidence="1">Purine metabolism; AMP biosynthesis via salvage pathway; AMP from adenine: step 1/1.</text>
</comment>
<comment type="subunit">
    <text evidence="1">Homodimer.</text>
</comment>
<comment type="subcellular location">
    <subcellularLocation>
        <location evidence="1">Cytoplasm</location>
    </subcellularLocation>
</comment>
<comment type="similarity">
    <text evidence="1">Belongs to the purine/pyrimidine phosphoribosyltransferase family.</text>
</comment>
<proteinExistence type="inferred from homology"/>
<organism>
    <name type="scientific">Streptococcus suis (strain 05ZYH33)</name>
    <dbReference type="NCBI Taxonomy" id="391295"/>
    <lineage>
        <taxon>Bacteria</taxon>
        <taxon>Bacillati</taxon>
        <taxon>Bacillota</taxon>
        <taxon>Bacilli</taxon>
        <taxon>Lactobacillales</taxon>
        <taxon>Streptococcaceae</taxon>
        <taxon>Streptococcus</taxon>
    </lineage>
</organism>
<keyword id="KW-0963">Cytoplasm</keyword>
<keyword id="KW-0328">Glycosyltransferase</keyword>
<keyword id="KW-0660">Purine salvage</keyword>
<keyword id="KW-0808">Transferase</keyword>